<comment type="function">
    <text evidence="4">Transcriptional activator that specifically binds DNA of heat shock promoter elements (HSE).</text>
</comment>
<comment type="subunit">
    <text evidence="1">Homotrimer.</text>
</comment>
<comment type="interaction">
    <interactant intactId="EBI-7005709">
        <id>Q7XHZ0</id>
    </interactant>
    <interactant intactId="EBI-7005709">
        <id>Q7XHZ0</id>
        <label>HSFB4B</label>
    </interactant>
    <organismsDiffer>false</organismsDiffer>
    <experiments>3</experiments>
</comment>
<comment type="subcellular location">
    <subcellularLocation>
        <location evidence="6">Nucleus</location>
    </subcellularLocation>
</comment>
<comment type="alternative products">
    <event type="alternative splicing"/>
    <isoform>
        <id>Q7XHZ0-1</id>
        <name>1</name>
        <sequence type="displayed"/>
    </isoform>
    <isoform>
        <id>Q7XHZ0-2</id>
        <name>2</name>
        <sequence type="described" ref="VSP_035450 VSP_035451"/>
    </isoform>
</comment>
<comment type="domain">
    <text>The hydrophobic-rich region (HR-A/B) corresponds to the oligomerization domain.</text>
</comment>
<comment type="PTM">
    <text evidence="1">Exhibits temperature-dependent phosphorylation.</text>
</comment>
<comment type="similarity">
    <text evidence="6">Belongs to the HSF family. Class B subfamily.</text>
</comment>
<reference key="1">
    <citation type="journal article" date="2005" name="J. Biochem. Mol. Biol.">
        <title>Isolation and characterization of a cDNA encoding two novel heat-shock factor OsHSF6 and OsHSF12 in Oryza sativa L.</title>
        <authorList>
            <person name="Liu J.-G."/>
            <person name="Yao Q.-H."/>
            <person name="Zhang Z."/>
            <person name="Peng R.-H."/>
            <person name="Xiong A.-S."/>
            <person name="Xu F."/>
            <person name="Zhu H."/>
        </authorList>
    </citation>
    <scope>NUCLEOTIDE SEQUENCE [MRNA] (ISOFORM 1)</scope>
    <scope>FUNCTION</scope>
</reference>
<reference key="2">
    <citation type="journal article" date="2005" name="Nature">
        <title>The map-based sequence of the rice genome.</title>
        <authorList>
            <consortium name="International rice genome sequencing project (IRGSP)"/>
        </authorList>
    </citation>
    <scope>NUCLEOTIDE SEQUENCE [LARGE SCALE GENOMIC DNA]</scope>
    <source>
        <strain>cv. Nipponbare</strain>
    </source>
</reference>
<reference key="3">
    <citation type="journal article" date="2008" name="Nucleic Acids Res.">
        <title>The rice annotation project database (RAP-DB): 2008 update.</title>
        <authorList>
            <consortium name="The rice annotation project (RAP)"/>
        </authorList>
    </citation>
    <scope>GENOME REANNOTATION</scope>
    <source>
        <strain>cv. Nipponbare</strain>
    </source>
</reference>
<reference key="4">
    <citation type="journal article" date="2013" name="Rice">
        <title>Improvement of the Oryza sativa Nipponbare reference genome using next generation sequence and optical map data.</title>
        <authorList>
            <person name="Kawahara Y."/>
            <person name="de la Bastide M."/>
            <person name="Hamilton J.P."/>
            <person name="Kanamori H."/>
            <person name="McCombie W.R."/>
            <person name="Ouyang S."/>
            <person name="Schwartz D.C."/>
            <person name="Tanaka T."/>
            <person name="Wu J."/>
            <person name="Zhou S."/>
            <person name="Childs K.L."/>
            <person name="Davidson R.M."/>
            <person name="Lin H."/>
            <person name="Quesada-Ocampo L."/>
            <person name="Vaillancourt B."/>
            <person name="Sakai H."/>
            <person name="Lee S.S."/>
            <person name="Kim J."/>
            <person name="Numa H."/>
            <person name="Itoh T."/>
            <person name="Buell C.R."/>
            <person name="Matsumoto T."/>
        </authorList>
    </citation>
    <scope>GENOME REANNOTATION</scope>
    <source>
        <strain>cv. Nipponbare</strain>
    </source>
</reference>
<reference key="5">
    <citation type="journal article" date="2003" name="Science">
        <title>Collection, mapping, and annotation of over 28,000 cDNA clones from japonica rice.</title>
        <authorList>
            <consortium name="The rice full-length cDNA consortium"/>
        </authorList>
    </citation>
    <scope>NUCLEOTIDE SEQUENCE [LARGE SCALE MRNA] (ISOFORMS 1 AND 2)</scope>
    <source>
        <strain>cv. Nipponbare</strain>
    </source>
</reference>
<reference key="6">
    <citation type="journal article" date="2004" name="J. Biosci.">
        <title>Heat stress response in plants: a complex game with chaperones and more than twenty heat stress transcription factors.</title>
        <authorList>
            <person name="Baniwal S.K."/>
            <person name="Bharti K."/>
            <person name="Chan K.Y."/>
            <person name="Fauth M."/>
            <person name="Ganguli A."/>
            <person name="Kotak S."/>
            <person name="Mishra S.K."/>
            <person name="Nover L."/>
            <person name="Port M."/>
            <person name="Scharf K.-D."/>
            <person name="Tripp J."/>
            <person name="Weber C."/>
            <person name="Zielinski D."/>
            <person name="von Koskull-Doering P."/>
        </authorList>
    </citation>
    <scope>GENE FAMILY</scope>
    <scope>NOMENCLATURE</scope>
</reference>
<reference key="7">
    <citation type="journal article" date="2008" name="J. Genet. Genomics">
        <title>Genome-wide analysis of heat shock transcription factor families in rice and Arabidopsis.</title>
        <authorList>
            <person name="Guo J."/>
            <person name="Wu J."/>
            <person name="Ji Q."/>
            <person name="Wang C."/>
            <person name="Luo L."/>
            <person name="Yuan Y."/>
            <person name="Wang Y."/>
            <person name="Wang J."/>
        </authorList>
    </citation>
    <scope>GENE FAMILY</scope>
    <scope>NOMENCLATURE</scope>
</reference>
<evidence type="ECO:0000250" key="1"/>
<evidence type="ECO:0000255" key="2"/>
<evidence type="ECO:0000256" key="3">
    <source>
        <dbReference type="SAM" id="MobiDB-lite"/>
    </source>
</evidence>
<evidence type="ECO:0000269" key="4">
    <source>
    </source>
</evidence>
<evidence type="ECO:0000303" key="5">
    <source>
    </source>
</evidence>
<evidence type="ECO:0000305" key="6"/>
<feature type="chain" id="PRO_0000350838" description="Heat stress transcription factor B-4b">
    <location>
        <begin position="1"/>
        <end position="310"/>
    </location>
</feature>
<feature type="region of interest" description="Disordered" evidence="3">
    <location>
        <begin position="124"/>
        <end position="147"/>
    </location>
</feature>
<feature type="region of interest" description="Hydrophobic repeat HR-A/B">
    <location>
        <begin position="196"/>
        <end position="225"/>
    </location>
</feature>
<feature type="region of interest" description="Disordered" evidence="3">
    <location>
        <begin position="257"/>
        <end position="310"/>
    </location>
</feature>
<feature type="short sequence motif" description="Nuclear localization signal" evidence="2">
    <location>
        <begin position="291"/>
        <end position="297"/>
    </location>
</feature>
<feature type="compositionally biased region" description="Pro residues" evidence="3">
    <location>
        <begin position="263"/>
        <end position="272"/>
    </location>
</feature>
<feature type="compositionally biased region" description="Basic and acidic residues" evidence="3">
    <location>
        <begin position="296"/>
        <end position="310"/>
    </location>
</feature>
<feature type="splice variant" id="VSP_035450" description="In isoform 2." evidence="5">
    <original>GP</original>
    <variation>AP</variation>
    <location>
        <begin position="18"/>
        <end position="19"/>
    </location>
</feature>
<feature type="splice variant" id="VSP_035451" description="In isoform 2." evidence="5">
    <location>
        <begin position="20"/>
        <end position="131"/>
    </location>
</feature>
<feature type="sequence conflict" description="In Ref. 5; AK102159." evidence="6" ref="5">
    <original>T</original>
    <variation>A</variation>
    <location>
        <position position="232"/>
    </location>
</feature>
<gene>
    <name type="primary">HSFB4B</name>
    <name type="synonym">HSF12</name>
    <name type="synonym">HSF19</name>
    <name type="ordered locus">Os07g0640900</name>
    <name type="ordered locus">LOC_Os07g44690</name>
    <name type="ORF">OJ1340_C08.141-1</name>
    <name type="ORF">OJ1340_C08.141-2</name>
    <name type="ORF">P0524G08.108-1</name>
    <name type="ORF">P0524G08.108-2</name>
</gene>
<accession>Q7XHZ0</accession>
<accession>B7E985</accession>
<accession>Q7XHZ1</accession>
<protein>
    <recommendedName>
        <fullName>Heat stress transcription factor B-4b</fullName>
    </recommendedName>
    <alternativeName>
        <fullName>Heat stress transcription factor 12</fullName>
        <shortName>OsHSF12</shortName>
        <shortName>rHsf12</shortName>
    </alternativeName>
    <alternativeName>
        <fullName>Heat stress transcription factor 19</fullName>
        <shortName>OsHsf-19</shortName>
    </alternativeName>
</protein>
<keyword id="KW-0010">Activator</keyword>
<keyword id="KW-0025">Alternative splicing</keyword>
<keyword id="KW-0238">DNA-binding</keyword>
<keyword id="KW-0539">Nucleus</keyword>
<keyword id="KW-0597">Phosphoprotein</keyword>
<keyword id="KW-1185">Reference proteome</keyword>
<keyword id="KW-0346">Stress response</keyword>
<keyword id="KW-0804">Transcription</keyword>
<keyword id="KW-0805">Transcription regulation</keyword>
<dbReference type="EMBL" id="AY344494">
    <property type="protein sequence ID" value="AAQ23066.1"/>
    <property type="molecule type" value="mRNA"/>
</dbReference>
<dbReference type="EMBL" id="AP004671">
    <property type="protein sequence ID" value="BAC79969.1"/>
    <property type="molecule type" value="Genomic_DNA"/>
</dbReference>
<dbReference type="EMBL" id="AP004671">
    <property type="protein sequence ID" value="BAC79970.1"/>
    <property type="molecule type" value="Genomic_DNA"/>
</dbReference>
<dbReference type="EMBL" id="AP005292">
    <property type="protein sequence ID" value="BAD31268.1"/>
    <property type="molecule type" value="Genomic_DNA"/>
</dbReference>
<dbReference type="EMBL" id="AP005292">
    <property type="protein sequence ID" value="BAD31269.1"/>
    <property type="molecule type" value="Genomic_DNA"/>
</dbReference>
<dbReference type="EMBL" id="AP008213">
    <property type="protein sequence ID" value="BAF22338.1"/>
    <property type="molecule type" value="Genomic_DNA"/>
</dbReference>
<dbReference type="EMBL" id="AP014963">
    <property type="protein sequence ID" value="BAT02857.1"/>
    <property type="molecule type" value="Genomic_DNA"/>
</dbReference>
<dbReference type="EMBL" id="AP014963">
    <property type="protein sequence ID" value="BAT02858.1"/>
    <property type="molecule type" value="Genomic_DNA"/>
</dbReference>
<dbReference type="EMBL" id="AK063952">
    <property type="protein sequence ID" value="BAG88932.1"/>
    <property type="molecule type" value="mRNA"/>
</dbReference>
<dbReference type="EMBL" id="AK102159">
    <property type="status" value="NOT_ANNOTATED_CDS"/>
    <property type="molecule type" value="mRNA"/>
</dbReference>
<dbReference type="RefSeq" id="XP_015645691.1">
    <property type="nucleotide sequence ID" value="XM_015790205.1"/>
</dbReference>
<dbReference type="SMR" id="Q7XHZ0"/>
<dbReference type="FunCoup" id="Q7XHZ0">
    <property type="interactions" value="6"/>
</dbReference>
<dbReference type="IntAct" id="Q7XHZ0">
    <property type="interactions" value="4"/>
</dbReference>
<dbReference type="MINT" id="Q7XHZ0"/>
<dbReference type="STRING" id="39947.Q7XHZ0"/>
<dbReference type="PaxDb" id="39947-Q7XHZ0"/>
<dbReference type="EnsemblPlants" id="Os07t0640900-02">
    <molecule id="Q7XHZ0-1"/>
    <property type="protein sequence ID" value="Os07t0640900-02"/>
    <property type="gene ID" value="Os07g0640900"/>
</dbReference>
<dbReference type="Gramene" id="Os07t0640900-02">
    <molecule id="Q7XHZ0-1"/>
    <property type="protein sequence ID" value="Os07t0640900-02"/>
    <property type="gene ID" value="Os07g0640900"/>
</dbReference>
<dbReference type="KEGG" id="dosa:Os07g0640900"/>
<dbReference type="eggNOG" id="KOG0627">
    <property type="taxonomic scope" value="Eukaryota"/>
</dbReference>
<dbReference type="HOGENOM" id="CLU_030308_3_1_1"/>
<dbReference type="InParanoid" id="Q7XHZ0"/>
<dbReference type="OMA" id="QDESLCW"/>
<dbReference type="OrthoDB" id="60033at2759"/>
<dbReference type="Proteomes" id="UP000000763">
    <property type="component" value="Chromosome 7"/>
</dbReference>
<dbReference type="Proteomes" id="UP000059680">
    <property type="component" value="Chromosome 7"/>
</dbReference>
<dbReference type="ExpressionAtlas" id="Q7XHZ0">
    <property type="expression patterns" value="baseline and differential"/>
</dbReference>
<dbReference type="GO" id="GO:0005634">
    <property type="term" value="C:nucleus"/>
    <property type="evidence" value="ECO:0000318"/>
    <property type="project" value="GO_Central"/>
</dbReference>
<dbReference type="GO" id="GO:0003700">
    <property type="term" value="F:DNA-binding transcription factor activity"/>
    <property type="evidence" value="ECO:0000318"/>
    <property type="project" value="GO_Central"/>
</dbReference>
<dbReference type="GO" id="GO:0042802">
    <property type="term" value="F:identical protein binding"/>
    <property type="evidence" value="ECO:0000353"/>
    <property type="project" value="IntAct"/>
</dbReference>
<dbReference type="GO" id="GO:0043565">
    <property type="term" value="F:sequence-specific DNA binding"/>
    <property type="evidence" value="ECO:0007669"/>
    <property type="project" value="InterPro"/>
</dbReference>
<dbReference type="GO" id="GO:0006357">
    <property type="term" value="P:regulation of transcription by RNA polymerase II"/>
    <property type="evidence" value="ECO:0000318"/>
    <property type="project" value="GO_Central"/>
</dbReference>
<dbReference type="FunFam" id="1.10.10.10:FF:000037">
    <property type="entry name" value="Heat stress transcription factor B-4"/>
    <property type="match status" value="1"/>
</dbReference>
<dbReference type="Gene3D" id="1.10.10.10">
    <property type="entry name" value="Winged helix-like DNA-binding domain superfamily/Winged helix DNA-binding domain"/>
    <property type="match status" value="1"/>
</dbReference>
<dbReference type="InterPro" id="IPR000232">
    <property type="entry name" value="HSF_DNA-bd"/>
</dbReference>
<dbReference type="InterPro" id="IPR036388">
    <property type="entry name" value="WH-like_DNA-bd_sf"/>
</dbReference>
<dbReference type="InterPro" id="IPR036390">
    <property type="entry name" value="WH_DNA-bd_sf"/>
</dbReference>
<dbReference type="PANTHER" id="PTHR10015">
    <property type="entry name" value="HEAT SHOCK TRANSCRIPTION FACTOR"/>
    <property type="match status" value="1"/>
</dbReference>
<dbReference type="PANTHER" id="PTHR10015:SF304">
    <property type="entry name" value="HEAT STRESS TRANSCRIPTION FACTOR B-4B"/>
    <property type="match status" value="1"/>
</dbReference>
<dbReference type="Pfam" id="PF00447">
    <property type="entry name" value="HSF_DNA-bind"/>
    <property type="match status" value="1"/>
</dbReference>
<dbReference type="PRINTS" id="PR00056">
    <property type="entry name" value="HSFDOMAIN"/>
</dbReference>
<dbReference type="SMART" id="SM00415">
    <property type="entry name" value="HSF"/>
    <property type="match status" value="1"/>
</dbReference>
<dbReference type="SUPFAM" id="SSF46785">
    <property type="entry name" value="Winged helix' DNA-binding domain"/>
    <property type="match status" value="1"/>
</dbReference>
<dbReference type="PROSITE" id="PS00434">
    <property type="entry name" value="HSF_DOMAIN"/>
    <property type="match status" value="1"/>
</dbReference>
<sequence>MAFLVERCGEMVVSMEMGPHGGGGAAAGKPVPAPFLTKTYQLVDDPCTDHIVSWGEDDTTFVVWRPPEFARDLLPNYFKHNNFSSFVRQLNTYGFRKIVADRWEFANEFFRKGAKHLLAEIHRRKSSQPPPPPMPHQPYHHHHHLNPFSLPPPPPAYHHHHLIQEEPATTAHCTVAGDGGEGGDFLAALSEDNRQLRRRNSLLLSELAHMKKLYNDIIYFLQNHVAPVTTTTTTPSSTAMAAAQHHLPAAASCRLMELDSPDHSPPPPPPKTPATDGGDTVKLFGVSLHGRKKRAHRDDDDGVHDQGSEV</sequence>
<name>HFB4B_ORYSJ</name>
<organism>
    <name type="scientific">Oryza sativa subsp. japonica</name>
    <name type="common">Rice</name>
    <dbReference type="NCBI Taxonomy" id="39947"/>
    <lineage>
        <taxon>Eukaryota</taxon>
        <taxon>Viridiplantae</taxon>
        <taxon>Streptophyta</taxon>
        <taxon>Embryophyta</taxon>
        <taxon>Tracheophyta</taxon>
        <taxon>Spermatophyta</taxon>
        <taxon>Magnoliopsida</taxon>
        <taxon>Liliopsida</taxon>
        <taxon>Poales</taxon>
        <taxon>Poaceae</taxon>
        <taxon>BOP clade</taxon>
        <taxon>Oryzoideae</taxon>
        <taxon>Oryzeae</taxon>
        <taxon>Oryzinae</taxon>
        <taxon>Oryza</taxon>
        <taxon>Oryza sativa</taxon>
    </lineage>
</organism>
<proteinExistence type="evidence at protein level"/>